<keyword id="KW-0012">Acyltransferase</keyword>
<keyword id="KW-0133">Cell shape</keyword>
<keyword id="KW-0961">Cell wall biogenesis/degradation</keyword>
<keyword id="KW-0963">Cytoplasm</keyword>
<keyword id="KW-0460">Magnesium</keyword>
<keyword id="KW-0479">Metal-binding</keyword>
<keyword id="KW-0511">Multifunctional enzyme</keyword>
<keyword id="KW-0548">Nucleotidyltransferase</keyword>
<keyword id="KW-0573">Peptidoglycan synthesis</keyword>
<keyword id="KW-0677">Repeat</keyword>
<keyword id="KW-0808">Transferase</keyword>
<reference key="1">
    <citation type="journal article" date="2004" name="PLoS Biol.">
        <title>Phylogenomics of the reproductive parasite Wolbachia pipientis wMel: a streamlined genome overrun by mobile genetic elements.</title>
        <authorList>
            <person name="Wu M."/>
            <person name="Sun L.V."/>
            <person name="Vamathevan J.J."/>
            <person name="Riegler M."/>
            <person name="DeBoy R.T."/>
            <person name="Brownlie J.C."/>
            <person name="McGraw E.A."/>
            <person name="Martin W."/>
            <person name="Esser C."/>
            <person name="Ahmadinejad N."/>
            <person name="Wiegand C."/>
            <person name="Madupu R."/>
            <person name="Beanan M.J."/>
            <person name="Brinkac L.M."/>
            <person name="Daugherty S.C."/>
            <person name="Durkin A.S."/>
            <person name="Kolonay J.F."/>
            <person name="Nelson W.C."/>
            <person name="Mohamoud Y."/>
            <person name="Lee P."/>
            <person name="Berry K.J."/>
            <person name="Young M.B."/>
            <person name="Utterback T.R."/>
            <person name="Weidman J.F."/>
            <person name="Nierman W.C."/>
            <person name="Paulsen I.T."/>
            <person name="Nelson K.E."/>
            <person name="Tettelin H."/>
            <person name="O'Neill S.L."/>
            <person name="Eisen J.A."/>
        </authorList>
    </citation>
    <scope>NUCLEOTIDE SEQUENCE [LARGE SCALE GENOMIC DNA]</scope>
</reference>
<organism>
    <name type="scientific">Wolbachia pipientis wMel</name>
    <dbReference type="NCBI Taxonomy" id="163164"/>
    <lineage>
        <taxon>Bacteria</taxon>
        <taxon>Pseudomonadati</taxon>
        <taxon>Pseudomonadota</taxon>
        <taxon>Alphaproteobacteria</taxon>
        <taxon>Rickettsiales</taxon>
        <taxon>Anaplasmataceae</taxon>
        <taxon>Wolbachieae</taxon>
        <taxon>Wolbachia</taxon>
    </lineage>
</organism>
<gene>
    <name evidence="1" type="primary">glmU</name>
    <name type="ordered locus">WD_0133</name>
</gene>
<sequence>MISKTHTFVILASGHGRRMNSDLPKVLHKIGSFSMLQHVIYNAKQLNPENIAVVVDQPLIERLKCFKDIQLITQELTLGTGDAVKTAMRNLRELPDSSIVVVQYGDTPLIKSSTITKMISYLEGKALVCLGFRTSNKEYGRLIIENGSLREIVEAKSDKNNHEEFLANAGIMVACAKNLRELVEKIECNSSTHEYYLTDIVSIAVKSNLNVGYVITGGEEATGINNRNDLIKAEFYFQENKRKIFTDSGVTLVAPETVFFSLDTQIARDSVIYPYVFFGTGVKIESGAKILPFSHLENCLIKSNAEVGPFTRIRGNTTIGNKAKIGNFVEVKTSEVGQNTRIKHLSYIGNAKVGQESNIGAGTIVCNYDGKNKHETNIGSNCFVGANSSLIAPLNIHDESVIAAGSVIVEDVPEKSLAIAREKQVTKRIK</sequence>
<protein>
    <recommendedName>
        <fullName evidence="1">Bifunctional protein GlmU</fullName>
    </recommendedName>
    <domain>
        <recommendedName>
            <fullName evidence="1">UDP-N-acetylglucosamine pyrophosphorylase</fullName>
            <ecNumber evidence="1">2.7.7.23</ecNumber>
        </recommendedName>
        <alternativeName>
            <fullName evidence="1">N-acetylglucosamine-1-phosphate uridyltransferase</fullName>
        </alternativeName>
    </domain>
    <domain>
        <recommendedName>
            <fullName evidence="1">Glucosamine-1-phosphate N-acetyltransferase</fullName>
            <ecNumber evidence="1">2.3.1.157</ecNumber>
        </recommendedName>
    </domain>
</protein>
<feature type="chain" id="PRO_0000233878" description="Bifunctional protein GlmU">
    <location>
        <begin position="1"/>
        <end position="430"/>
    </location>
</feature>
<feature type="region of interest" description="Pyrophosphorylase" evidence="1">
    <location>
        <begin position="1"/>
        <end position="227"/>
    </location>
</feature>
<feature type="region of interest" description="Linker" evidence="1">
    <location>
        <begin position="228"/>
        <end position="248"/>
    </location>
</feature>
<feature type="region of interest" description="N-acetyltransferase" evidence="1">
    <location>
        <begin position="249"/>
        <end position="430"/>
    </location>
</feature>
<feature type="active site" description="Proton acceptor" evidence="1">
    <location>
        <position position="344"/>
    </location>
</feature>
<feature type="binding site" evidence="1">
    <location>
        <position position="25"/>
    </location>
    <ligand>
        <name>UDP-N-acetyl-alpha-D-glucosamine</name>
        <dbReference type="ChEBI" id="CHEBI:57705"/>
    </ligand>
</feature>
<feature type="binding site" evidence="1">
    <location>
        <position position="74"/>
    </location>
    <ligand>
        <name>UDP-N-acetyl-alpha-D-glucosamine</name>
        <dbReference type="ChEBI" id="CHEBI:57705"/>
    </ligand>
</feature>
<feature type="binding site" evidence="1">
    <location>
        <begin position="79"/>
        <end position="80"/>
    </location>
    <ligand>
        <name>UDP-N-acetyl-alpha-D-glucosamine</name>
        <dbReference type="ChEBI" id="CHEBI:57705"/>
    </ligand>
</feature>
<feature type="binding site" evidence="1">
    <location>
        <begin position="104"/>
        <end position="106"/>
    </location>
    <ligand>
        <name>UDP-N-acetyl-alpha-D-glucosamine</name>
        <dbReference type="ChEBI" id="CHEBI:57705"/>
    </ligand>
</feature>
<feature type="binding site" evidence="1">
    <location>
        <position position="106"/>
    </location>
    <ligand>
        <name>Mg(2+)</name>
        <dbReference type="ChEBI" id="CHEBI:18420"/>
    </ligand>
</feature>
<feature type="binding site" evidence="1">
    <location>
        <position position="140"/>
    </location>
    <ligand>
        <name>UDP-N-acetyl-alpha-D-glucosamine</name>
        <dbReference type="ChEBI" id="CHEBI:57705"/>
    </ligand>
</feature>
<feature type="binding site" evidence="1">
    <location>
        <position position="154"/>
    </location>
    <ligand>
        <name>UDP-N-acetyl-alpha-D-glucosamine</name>
        <dbReference type="ChEBI" id="CHEBI:57705"/>
    </ligand>
</feature>
<feature type="binding site" evidence="1">
    <location>
        <position position="168"/>
    </location>
    <ligand>
        <name>UDP-N-acetyl-alpha-D-glucosamine</name>
        <dbReference type="ChEBI" id="CHEBI:57705"/>
    </ligand>
</feature>
<feature type="binding site" evidence="1">
    <location>
        <position position="225"/>
    </location>
    <ligand>
        <name>Mg(2+)</name>
        <dbReference type="ChEBI" id="CHEBI:18420"/>
    </ligand>
</feature>
<feature type="binding site" evidence="1">
    <location>
        <position position="225"/>
    </location>
    <ligand>
        <name>UDP-N-acetyl-alpha-D-glucosamine</name>
        <dbReference type="ChEBI" id="CHEBI:57705"/>
    </ligand>
</feature>
<feature type="binding site" evidence="1">
    <location>
        <position position="314"/>
    </location>
    <ligand>
        <name>UDP-N-acetyl-alpha-D-glucosamine</name>
        <dbReference type="ChEBI" id="CHEBI:57705"/>
    </ligand>
</feature>
<feature type="binding site" evidence="1">
    <location>
        <position position="332"/>
    </location>
    <ligand>
        <name>UDP-N-acetyl-alpha-D-glucosamine</name>
        <dbReference type="ChEBI" id="CHEBI:57705"/>
    </ligand>
</feature>
<feature type="binding site" evidence="1">
    <location>
        <position position="347"/>
    </location>
    <ligand>
        <name>UDP-N-acetyl-alpha-D-glucosamine</name>
        <dbReference type="ChEBI" id="CHEBI:57705"/>
    </ligand>
</feature>
<feature type="binding site" evidence="1">
    <location>
        <position position="358"/>
    </location>
    <ligand>
        <name>UDP-N-acetyl-alpha-D-glucosamine</name>
        <dbReference type="ChEBI" id="CHEBI:57705"/>
    </ligand>
</feature>
<feature type="binding site" evidence="1">
    <location>
        <position position="361"/>
    </location>
    <ligand>
        <name>acetyl-CoA</name>
        <dbReference type="ChEBI" id="CHEBI:57288"/>
    </ligand>
</feature>
<feature type="binding site" evidence="1">
    <location>
        <begin position="367"/>
        <end position="368"/>
    </location>
    <ligand>
        <name>acetyl-CoA</name>
        <dbReference type="ChEBI" id="CHEBI:57288"/>
    </ligand>
</feature>
<feature type="binding site" evidence="1">
    <location>
        <position position="404"/>
    </location>
    <ligand>
        <name>acetyl-CoA</name>
        <dbReference type="ChEBI" id="CHEBI:57288"/>
    </ligand>
</feature>
<feature type="binding site" evidence="1">
    <location>
        <position position="421"/>
    </location>
    <ligand>
        <name>acetyl-CoA</name>
        <dbReference type="ChEBI" id="CHEBI:57288"/>
    </ligand>
</feature>
<evidence type="ECO:0000255" key="1">
    <source>
        <dbReference type="HAMAP-Rule" id="MF_01631"/>
    </source>
</evidence>
<proteinExistence type="inferred from homology"/>
<name>GLMU_WOLPM</name>
<accession>Q73IM4</accession>
<comment type="function">
    <text evidence="1">Catalyzes the last two sequential reactions in the de novo biosynthetic pathway for UDP-N-acetylglucosamine (UDP-GlcNAc). The C-terminal domain catalyzes the transfer of acetyl group from acetyl coenzyme A to glucosamine-1-phosphate (GlcN-1-P) to produce N-acetylglucosamine-1-phosphate (GlcNAc-1-P), which is converted into UDP-GlcNAc by the transfer of uridine 5-monophosphate (from uridine 5-triphosphate), a reaction catalyzed by the N-terminal domain.</text>
</comment>
<comment type="catalytic activity">
    <reaction evidence="1">
        <text>alpha-D-glucosamine 1-phosphate + acetyl-CoA = N-acetyl-alpha-D-glucosamine 1-phosphate + CoA + H(+)</text>
        <dbReference type="Rhea" id="RHEA:13725"/>
        <dbReference type="ChEBI" id="CHEBI:15378"/>
        <dbReference type="ChEBI" id="CHEBI:57287"/>
        <dbReference type="ChEBI" id="CHEBI:57288"/>
        <dbReference type="ChEBI" id="CHEBI:57776"/>
        <dbReference type="ChEBI" id="CHEBI:58516"/>
        <dbReference type="EC" id="2.3.1.157"/>
    </reaction>
</comment>
<comment type="catalytic activity">
    <reaction evidence="1">
        <text>N-acetyl-alpha-D-glucosamine 1-phosphate + UTP + H(+) = UDP-N-acetyl-alpha-D-glucosamine + diphosphate</text>
        <dbReference type="Rhea" id="RHEA:13509"/>
        <dbReference type="ChEBI" id="CHEBI:15378"/>
        <dbReference type="ChEBI" id="CHEBI:33019"/>
        <dbReference type="ChEBI" id="CHEBI:46398"/>
        <dbReference type="ChEBI" id="CHEBI:57705"/>
        <dbReference type="ChEBI" id="CHEBI:57776"/>
        <dbReference type="EC" id="2.7.7.23"/>
    </reaction>
</comment>
<comment type="cofactor">
    <cofactor evidence="1">
        <name>Mg(2+)</name>
        <dbReference type="ChEBI" id="CHEBI:18420"/>
    </cofactor>
    <text evidence="1">Binds 1 Mg(2+) ion per subunit.</text>
</comment>
<comment type="pathway">
    <text evidence="1">Nucleotide-sugar biosynthesis; UDP-N-acetyl-alpha-D-glucosamine biosynthesis; N-acetyl-alpha-D-glucosamine 1-phosphate from alpha-D-glucosamine 6-phosphate (route II): step 2/2.</text>
</comment>
<comment type="pathway">
    <text evidence="1">Nucleotide-sugar biosynthesis; UDP-N-acetyl-alpha-D-glucosamine biosynthesis; UDP-N-acetyl-alpha-D-glucosamine from N-acetyl-alpha-D-glucosamine 1-phosphate: step 1/1.</text>
</comment>
<comment type="pathway">
    <text evidence="1">Bacterial outer membrane biogenesis; LPS lipid A biosynthesis.</text>
</comment>
<comment type="subunit">
    <text evidence="1">Homotrimer.</text>
</comment>
<comment type="subcellular location">
    <subcellularLocation>
        <location evidence="1">Cytoplasm</location>
    </subcellularLocation>
</comment>
<comment type="similarity">
    <text evidence="1">In the N-terminal section; belongs to the N-acetylglucosamine-1-phosphate uridyltransferase family.</text>
</comment>
<comment type="similarity">
    <text evidence="1">In the C-terminal section; belongs to the transferase hexapeptide repeat family.</text>
</comment>
<dbReference type="EC" id="2.7.7.23" evidence="1"/>
<dbReference type="EC" id="2.3.1.157" evidence="1"/>
<dbReference type="EMBL" id="AE017196">
    <property type="protein sequence ID" value="AAS13887.1"/>
    <property type="molecule type" value="Genomic_DNA"/>
</dbReference>
<dbReference type="RefSeq" id="WP_010962387.1">
    <property type="nucleotide sequence ID" value="NZ_OX384529.1"/>
</dbReference>
<dbReference type="SMR" id="Q73IM4"/>
<dbReference type="EnsemblBacteria" id="AAS13887">
    <property type="protein sequence ID" value="AAS13887"/>
    <property type="gene ID" value="WD_0133"/>
</dbReference>
<dbReference type="GeneID" id="70035625"/>
<dbReference type="KEGG" id="wol:WD_0133"/>
<dbReference type="eggNOG" id="COG1207">
    <property type="taxonomic scope" value="Bacteria"/>
</dbReference>
<dbReference type="UniPathway" id="UPA00113">
    <property type="reaction ID" value="UER00532"/>
</dbReference>
<dbReference type="UniPathway" id="UPA00113">
    <property type="reaction ID" value="UER00533"/>
</dbReference>
<dbReference type="UniPathway" id="UPA00973"/>
<dbReference type="Proteomes" id="UP000008215">
    <property type="component" value="Chromosome"/>
</dbReference>
<dbReference type="GO" id="GO:0005737">
    <property type="term" value="C:cytoplasm"/>
    <property type="evidence" value="ECO:0007669"/>
    <property type="project" value="UniProtKB-SubCell"/>
</dbReference>
<dbReference type="GO" id="GO:0016020">
    <property type="term" value="C:membrane"/>
    <property type="evidence" value="ECO:0007669"/>
    <property type="project" value="GOC"/>
</dbReference>
<dbReference type="GO" id="GO:0019134">
    <property type="term" value="F:glucosamine-1-phosphate N-acetyltransferase activity"/>
    <property type="evidence" value="ECO:0007669"/>
    <property type="project" value="UniProtKB-UniRule"/>
</dbReference>
<dbReference type="GO" id="GO:0000287">
    <property type="term" value="F:magnesium ion binding"/>
    <property type="evidence" value="ECO:0007669"/>
    <property type="project" value="UniProtKB-UniRule"/>
</dbReference>
<dbReference type="GO" id="GO:0003977">
    <property type="term" value="F:UDP-N-acetylglucosamine diphosphorylase activity"/>
    <property type="evidence" value="ECO:0007669"/>
    <property type="project" value="UniProtKB-UniRule"/>
</dbReference>
<dbReference type="GO" id="GO:0000902">
    <property type="term" value="P:cell morphogenesis"/>
    <property type="evidence" value="ECO:0007669"/>
    <property type="project" value="UniProtKB-UniRule"/>
</dbReference>
<dbReference type="GO" id="GO:0071555">
    <property type="term" value="P:cell wall organization"/>
    <property type="evidence" value="ECO:0007669"/>
    <property type="project" value="UniProtKB-KW"/>
</dbReference>
<dbReference type="GO" id="GO:0009245">
    <property type="term" value="P:lipid A biosynthetic process"/>
    <property type="evidence" value="ECO:0007669"/>
    <property type="project" value="UniProtKB-UniRule"/>
</dbReference>
<dbReference type="GO" id="GO:0009252">
    <property type="term" value="P:peptidoglycan biosynthetic process"/>
    <property type="evidence" value="ECO:0007669"/>
    <property type="project" value="UniProtKB-UniRule"/>
</dbReference>
<dbReference type="GO" id="GO:0008360">
    <property type="term" value="P:regulation of cell shape"/>
    <property type="evidence" value="ECO:0007669"/>
    <property type="project" value="UniProtKB-KW"/>
</dbReference>
<dbReference type="GO" id="GO:0006048">
    <property type="term" value="P:UDP-N-acetylglucosamine biosynthetic process"/>
    <property type="evidence" value="ECO:0007669"/>
    <property type="project" value="UniProtKB-UniPathway"/>
</dbReference>
<dbReference type="CDD" id="cd03353">
    <property type="entry name" value="LbH_GlmU_C"/>
    <property type="match status" value="1"/>
</dbReference>
<dbReference type="Gene3D" id="2.160.10.10">
    <property type="entry name" value="Hexapeptide repeat proteins"/>
    <property type="match status" value="1"/>
</dbReference>
<dbReference type="Gene3D" id="3.90.550.10">
    <property type="entry name" value="Spore Coat Polysaccharide Biosynthesis Protein SpsA, Chain A"/>
    <property type="match status" value="1"/>
</dbReference>
<dbReference type="HAMAP" id="MF_01631">
    <property type="entry name" value="GlmU"/>
    <property type="match status" value="1"/>
</dbReference>
<dbReference type="InterPro" id="IPR005882">
    <property type="entry name" value="Bifunctional_GlmU"/>
</dbReference>
<dbReference type="InterPro" id="IPR050065">
    <property type="entry name" value="GlmU-like"/>
</dbReference>
<dbReference type="InterPro" id="IPR038009">
    <property type="entry name" value="GlmU_C_LbH"/>
</dbReference>
<dbReference type="InterPro" id="IPR001451">
    <property type="entry name" value="Hexapep"/>
</dbReference>
<dbReference type="InterPro" id="IPR025877">
    <property type="entry name" value="MobA-like_NTP_Trfase"/>
</dbReference>
<dbReference type="InterPro" id="IPR029044">
    <property type="entry name" value="Nucleotide-diphossugar_trans"/>
</dbReference>
<dbReference type="InterPro" id="IPR011004">
    <property type="entry name" value="Trimer_LpxA-like_sf"/>
</dbReference>
<dbReference type="NCBIfam" id="TIGR01173">
    <property type="entry name" value="glmU"/>
    <property type="match status" value="1"/>
</dbReference>
<dbReference type="PANTHER" id="PTHR43584:SF3">
    <property type="entry name" value="BIFUNCTIONAL PROTEIN GLMU"/>
    <property type="match status" value="1"/>
</dbReference>
<dbReference type="PANTHER" id="PTHR43584">
    <property type="entry name" value="NUCLEOTIDYL TRANSFERASE"/>
    <property type="match status" value="1"/>
</dbReference>
<dbReference type="Pfam" id="PF00132">
    <property type="entry name" value="Hexapep"/>
    <property type="match status" value="1"/>
</dbReference>
<dbReference type="Pfam" id="PF14602">
    <property type="entry name" value="Hexapep_2"/>
    <property type="match status" value="1"/>
</dbReference>
<dbReference type="Pfam" id="PF12804">
    <property type="entry name" value="NTP_transf_3"/>
    <property type="match status" value="1"/>
</dbReference>
<dbReference type="SUPFAM" id="SSF53448">
    <property type="entry name" value="Nucleotide-diphospho-sugar transferases"/>
    <property type="match status" value="1"/>
</dbReference>
<dbReference type="SUPFAM" id="SSF51161">
    <property type="entry name" value="Trimeric LpxA-like enzymes"/>
    <property type="match status" value="1"/>
</dbReference>